<sequence>MRVRNRKGAGEMLAENAHIVVENPADFKGSWSERFGNDHPIHIEVGCGKGAFITGMAALHPEINYIAIDMQLSVLSYALDKAIEADLPNVQMMLVDGAALSEYFADGEIDQVYLNFSDPWPKGRHEKRRLTYKSFLATYEKILRPEGEIHFKTDNRGLFEYSLVSLANYGMELKKVWLDLHQDEEFAPQNVMTEYEQKFSQKGQVIYRLEAKFLPKK</sequence>
<organism>
    <name type="scientific">Lactococcus lactis subsp. cremoris (strain SK11)</name>
    <dbReference type="NCBI Taxonomy" id="272622"/>
    <lineage>
        <taxon>Bacteria</taxon>
        <taxon>Bacillati</taxon>
        <taxon>Bacillota</taxon>
        <taxon>Bacilli</taxon>
        <taxon>Lactobacillales</taxon>
        <taxon>Streptococcaceae</taxon>
        <taxon>Lactococcus</taxon>
        <taxon>Lactococcus cremoris subsp. cremoris</taxon>
    </lineage>
</organism>
<feature type="chain" id="PRO_0000288168" description="tRNA (guanine-N(7)-)-methyltransferase">
    <location>
        <begin position="1"/>
        <end position="217"/>
    </location>
</feature>
<feature type="region of interest" description="Interaction with RNA" evidence="2">
    <location>
        <begin position="124"/>
        <end position="129"/>
    </location>
</feature>
<feature type="active site" evidence="1">
    <location>
        <position position="118"/>
    </location>
</feature>
<feature type="binding site" evidence="2">
    <location>
        <position position="44"/>
    </location>
    <ligand>
        <name>S-adenosyl-L-methionine</name>
        <dbReference type="ChEBI" id="CHEBI:59789"/>
    </ligand>
</feature>
<feature type="binding site" evidence="2">
    <location>
        <position position="69"/>
    </location>
    <ligand>
        <name>S-adenosyl-L-methionine</name>
        <dbReference type="ChEBI" id="CHEBI:59789"/>
    </ligand>
</feature>
<feature type="binding site" evidence="2">
    <location>
        <position position="96"/>
    </location>
    <ligand>
        <name>S-adenosyl-L-methionine</name>
        <dbReference type="ChEBI" id="CHEBI:59789"/>
    </ligand>
</feature>
<feature type="binding site" evidence="2">
    <location>
        <position position="118"/>
    </location>
    <ligand>
        <name>S-adenosyl-L-methionine</name>
        <dbReference type="ChEBI" id="CHEBI:59789"/>
    </ligand>
</feature>
<feature type="binding site" evidence="2">
    <location>
        <position position="122"/>
    </location>
    <ligand>
        <name>substrate</name>
    </ligand>
</feature>
<feature type="binding site" evidence="2">
    <location>
        <position position="154"/>
    </location>
    <ligand>
        <name>substrate</name>
    </ligand>
</feature>
<feature type="binding site" evidence="2">
    <location>
        <begin position="193"/>
        <end position="196"/>
    </location>
    <ligand>
        <name>substrate</name>
    </ligand>
</feature>
<proteinExistence type="inferred from homology"/>
<name>TRMB_LACLS</name>
<comment type="function">
    <text evidence="2">Catalyzes the formation of N(7)-methylguanine at position 46 (m7G46) in tRNA.</text>
</comment>
<comment type="catalytic activity">
    <reaction evidence="2">
        <text>guanosine(46) in tRNA + S-adenosyl-L-methionine = N(7)-methylguanosine(46) in tRNA + S-adenosyl-L-homocysteine</text>
        <dbReference type="Rhea" id="RHEA:42708"/>
        <dbReference type="Rhea" id="RHEA-COMP:10188"/>
        <dbReference type="Rhea" id="RHEA-COMP:10189"/>
        <dbReference type="ChEBI" id="CHEBI:57856"/>
        <dbReference type="ChEBI" id="CHEBI:59789"/>
        <dbReference type="ChEBI" id="CHEBI:74269"/>
        <dbReference type="ChEBI" id="CHEBI:74480"/>
        <dbReference type="EC" id="2.1.1.33"/>
    </reaction>
</comment>
<comment type="pathway">
    <text evidence="2">tRNA modification; N(7)-methylguanine-tRNA biosynthesis.</text>
</comment>
<comment type="similarity">
    <text evidence="2">Belongs to the class I-like SAM-binding methyltransferase superfamily. TrmB family.</text>
</comment>
<evidence type="ECO:0000250" key="1"/>
<evidence type="ECO:0000255" key="2">
    <source>
        <dbReference type="HAMAP-Rule" id="MF_01057"/>
    </source>
</evidence>
<accession>Q030M2</accession>
<reference key="1">
    <citation type="journal article" date="2006" name="Proc. Natl. Acad. Sci. U.S.A.">
        <title>Comparative genomics of the lactic acid bacteria.</title>
        <authorList>
            <person name="Makarova K.S."/>
            <person name="Slesarev A."/>
            <person name="Wolf Y.I."/>
            <person name="Sorokin A."/>
            <person name="Mirkin B."/>
            <person name="Koonin E.V."/>
            <person name="Pavlov A."/>
            <person name="Pavlova N."/>
            <person name="Karamychev V."/>
            <person name="Polouchine N."/>
            <person name="Shakhova V."/>
            <person name="Grigoriev I."/>
            <person name="Lou Y."/>
            <person name="Rohksar D."/>
            <person name="Lucas S."/>
            <person name="Huang K."/>
            <person name="Goodstein D.M."/>
            <person name="Hawkins T."/>
            <person name="Plengvidhya V."/>
            <person name="Welker D."/>
            <person name="Hughes J."/>
            <person name="Goh Y."/>
            <person name="Benson A."/>
            <person name="Baldwin K."/>
            <person name="Lee J.-H."/>
            <person name="Diaz-Muniz I."/>
            <person name="Dosti B."/>
            <person name="Smeianov V."/>
            <person name="Wechter W."/>
            <person name="Barabote R."/>
            <person name="Lorca G."/>
            <person name="Altermann E."/>
            <person name="Barrangou R."/>
            <person name="Ganesan B."/>
            <person name="Xie Y."/>
            <person name="Rawsthorne H."/>
            <person name="Tamir D."/>
            <person name="Parker C."/>
            <person name="Breidt F."/>
            <person name="Broadbent J.R."/>
            <person name="Hutkins R."/>
            <person name="O'Sullivan D."/>
            <person name="Steele J."/>
            <person name="Unlu G."/>
            <person name="Saier M.H. Jr."/>
            <person name="Klaenhammer T."/>
            <person name="Richardson P."/>
            <person name="Kozyavkin S."/>
            <person name="Weimer B.C."/>
            <person name="Mills D.A."/>
        </authorList>
    </citation>
    <scope>NUCLEOTIDE SEQUENCE [LARGE SCALE GENOMIC DNA]</scope>
    <source>
        <strain>SK11</strain>
    </source>
</reference>
<keyword id="KW-0489">Methyltransferase</keyword>
<keyword id="KW-0949">S-adenosyl-L-methionine</keyword>
<keyword id="KW-0808">Transferase</keyword>
<keyword id="KW-0819">tRNA processing</keyword>
<gene>
    <name evidence="2" type="primary">trmB</name>
    <name type="ordered locus">LACR_0793</name>
</gene>
<dbReference type="EC" id="2.1.1.33" evidence="2"/>
<dbReference type="EMBL" id="CP000425">
    <property type="protein sequence ID" value="ABJ72350.1"/>
    <property type="molecule type" value="Genomic_DNA"/>
</dbReference>
<dbReference type="RefSeq" id="WP_011675719.1">
    <property type="nucleotide sequence ID" value="NC_008527.1"/>
</dbReference>
<dbReference type="SMR" id="Q030M2"/>
<dbReference type="KEGG" id="llc:LACR_0793"/>
<dbReference type="HOGENOM" id="CLU_050910_2_1_9"/>
<dbReference type="UniPathway" id="UPA00989"/>
<dbReference type="Proteomes" id="UP000000240">
    <property type="component" value="Chromosome"/>
</dbReference>
<dbReference type="GO" id="GO:0043527">
    <property type="term" value="C:tRNA methyltransferase complex"/>
    <property type="evidence" value="ECO:0007669"/>
    <property type="project" value="TreeGrafter"/>
</dbReference>
<dbReference type="GO" id="GO:0008176">
    <property type="term" value="F:tRNA (guanine(46)-N7)-methyltransferase activity"/>
    <property type="evidence" value="ECO:0007669"/>
    <property type="project" value="UniProtKB-UniRule"/>
</dbReference>
<dbReference type="CDD" id="cd02440">
    <property type="entry name" value="AdoMet_MTases"/>
    <property type="match status" value="1"/>
</dbReference>
<dbReference type="FunFam" id="3.40.50.150:FF:000035">
    <property type="entry name" value="tRNA (guanine-N(7)-)-methyltransferase"/>
    <property type="match status" value="1"/>
</dbReference>
<dbReference type="Gene3D" id="3.40.50.150">
    <property type="entry name" value="Vaccinia Virus protein VP39"/>
    <property type="match status" value="1"/>
</dbReference>
<dbReference type="HAMAP" id="MF_01057">
    <property type="entry name" value="tRNA_methyltr_TrmB"/>
    <property type="match status" value="1"/>
</dbReference>
<dbReference type="InterPro" id="IPR029063">
    <property type="entry name" value="SAM-dependent_MTases_sf"/>
</dbReference>
<dbReference type="InterPro" id="IPR003358">
    <property type="entry name" value="tRNA_(Gua-N-7)_MeTrfase_Trmb"/>
</dbReference>
<dbReference type="InterPro" id="IPR055361">
    <property type="entry name" value="tRNA_methyltr_TrmB_bact"/>
</dbReference>
<dbReference type="NCBIfam" id="NF001080">
    <property type="entry name" value="PRK00121.2-2"/>
    <property type="match status" value="1"/>
</dbReference>
<dbReference type="NCBIfam" id="TIGR00091">
    <property type="entry name" value="tRNA (guanosine(46)-N7)-methyltransferase TrmB"/>
    <property type="match status" value="1"/>
</dbReference>
<dbReference type="PANTHER" id="PTHR23417">
    <property type="entry name" value="3-DEOXY-D-MANNO-OCTULOSONIC-ACID TRANSFERASE/TRNA GUANINE-N 7 - -METHYLTRANSFERASE"/>
    <property type="match status" value="1"/>
</dbReference>
<dbReference type="PANTHER" id="PTHR23417:SF14">
    <property type="entry name" value="PENTACOTRIPEPTIDE-REPEAT REGION OF PRORP DOMAIN-CONTAINING PROTEIN"/>
    <property type="match status" value="1"/>
</dbReference>
<dbReference type="Pfam" id="PF02390">
    <property type="entry name" value="Methyltransf_4"/>
    <property type="match status" value="1"/>
</dbReference>
<dbReference type="SUPFAM" id="SSF53335">
    <property type="entry name" value="S-adenosyl-L-methionine-dependent methyltransferases"/>
    <property type="match status" value="1"/>
</dbReference>
<dbReference type="PROSITE" id="PS51625">
    <property type="entry name" value="SAM_MT_TRMB"/>
    <property type="match status" value="1"/>
</dbReference>
<protein>
    <recommendedName>
        <fullName evidence="2">tRNA (guanine-N(7)-)-methyltransferase</fullName>
        <ecNumber evidence="2">2.1.1.33</ecNumber>
    </recommendedName>
    <alternativeName>
        <fullName evidence="2">tRNA (guanine(46)-N(7))-methyltransferase</fullName>
    </alternativeName>
    <alternativeName>
        <fullName evidence="2">tRNA(m7G46)-methyltransferase</fullName>
    </alternativeName>
</protein>